<protein>
    <recommendedName>
        <fullName evidence="1">Photosystem I P700 chlorophyll a apoprotein A2</fullName>
        <ecNumber evidence="1">1.97.1.12</ecNumber>
    </recommendedName>
    <alternativeName>
        <fullName evidence="1">PSI-B</fullName>
    </alternativeName>
    <alternativeName>
        <fullName evidence="1">PsaB</fullName>
    </alternativeName>
</protein>
<organism>
    <name type="scientific">Eucalyptus globulus subsp. globulus</name>
    <name type="common">Tasmanian blue gum</name>
    <dbReference type="NCBI Taxonomy" id="71271"/>
    <lineage>
        <taxon>Eukaryota</taxon>
        <taxon>Viridiplantae</taxon>
        <taxon>Streptophyta</taxon>
        <taxon>Embryophyta</taxon>
        <taxon>Tracheophyta</taxon>
        <taxon>Spermatophyta</taxon>
        <taxon>Magnoliopsida</taxon>
        <taxon>eudicotyledons</taxon>
        <taxon>Gunneridae</taxon>
        <taxon>Pentapetalae</taxon>
        <taxon>rosids</taxon>
        <taxon>malvids</taxon>
        <taxon>Myrtales</taxon>
        <taxon>Myrtaceae</taxon>
        <taxon>Myrtoideae</taxon>
        <taxon>Eucalypteae</taxon>
        <taxon>Eucalyptus</taxon>
    </lineage>
</organism>
<keyword id="KW-0004">4Fe-4S</keyword>
<keyword id="KW-0148">Chlorophyll</keyword>
<keyword id="KW-0150">Chloroplast</keyword>
<keyword id="KW-0157">Chromophore</keyword>
<keyword id="KW-0249">Electron transport</keyword>
<keyword id="KW-0408">Iron</keyword>
<keyword id="KW-0411">Iron-sulfur</keyword>
<keyword id="KW-0460">Magnesium</keyword>
<keyword id="KW-0472">Membrane</keyword>
<keyword id="KW-0479">Metal-binding</keyword>
<keyword id="KW-0560">Oxidoreductase</keyword>
<keyword id="KW-0602">Photosynthesis</keyword>
<keyword id="KW-0603">Photosystem I</keyword>
<keyword id="KW-0934">Plastid</keyword>
<keyword id="KW-0793">Thylakoid</keyword>
<keyword id="KW-0812">Transmembrane</keyword>
<keyword id="KW-1133">Transmembrane helix</keyword>
<keyword id="KW-0813">Transport</keyword>
<evidence type="ECO:0000255" key="1">
    <source>
        <dbReference type="HAMAP-Rule" id="MF_00482"/>
    </source>
</evidence>
<comment type="function">
    <text evidence="1">PsaA and PsaB bind P700, the primary electron donor of photosystem I (PSI), as well as the electron acceptors A0, A1 and FX. PSI is a plastocyanin-ferredoxin oxidoreductase, converting photonic excitation into a charge separation, which transfers an electron from the donor P700 chlorophyll pair to the spectroscopically characterized acceptors A0, A1, FX, FA and FB in turn. Oxidized P700 is reduced on the lumenal side of the thylakoid membrane by plastocyanin.</text>
</comment>
<comment type="catalytic activity">
    <reaction evidence="1">
        <text>reduced [plastocyanin] + hnu + oxidized [2Fe-2S]-[ferredoxin] = oxidized [plastocyanin] + reduced [2Fe-2S]-[ferredoxin]</text>
        <dbReference type="Rhea" id="RHEA:30407"/>
        <dbReference type="Rhea" id="RHEA-COMP:10000"/>
        <dbReference type="Rhea" id="RHEA-COMP:10001"/>
        <dbReference type="Rhea" id="RHEA-COMP:10039"/>
        <dbReference type="Rhea" id="RHEA-COMP:10040"/>
        <dbReference type="ChEBI" id="CHEBI:29036"/>
        <dbReference type="ChEBI" id="CHEBI:30212"/>
        <dbReference type="ChEBI" id="CHEBI:33737"/>
        <dbReference type="ChEBI" id="CHEBI:33738"/>
        <dbReference type="ChEBI" id="CHEBI:49552"/>
        <dbReference type="EC" id="1.97.1.12"/>
    </reaction>
</comment>
<comment type="cofactor">
    <text evidence="1">P700 is a chlorophyll a/chlorophyll a' dimer, A0 is one or more chlorophyll a, A1 is one or both phylloquinones and FX is a shared 4Fe-4S iron-sulfur center.</text>
</comment>
<comment type="subunit">
    <text evidence="1">The PsaA/B heterodimer binds the P700 chlorophyll special pair and subsequent electron acceptors. PSI consists of a core antenna complex that captures photons, and an electron transfer chain that converts photonic excitation into a charge separation. The eukaryotic PSI reaction center is composed of at least 11 subunits.</text>
</comment>
<comment type="subcellular location">
    <subcellularLocation>
        <location>Plastid</location>
        <location>Chloroplast thylakoid membrane</location>
        <topology>Multi-pass membrane protein</topology>
    </subcellularLocation>
</comment>
<comment type="similarity">
    <text evidence="1">Belongs to the PsaA/PsaB family.</text>
</comment>
<geneLocation type="chloroplast"/>
<dbReference type="EC" id="1.97.1.12" evidence="1"/>
<dbReference type="EMBL" id="AY780259">
    <property type="protein sequence ID" value="AAX21028.1"/>
    <property type="molecule type" value="Genomic_DNA"/>
</dbReference>
<dbReference type="RefSeq" id="YP_636298.1">
    <property type="nucleotide sequence ID" value="NC_008115.1"/>
</dbReference>
<dbReference type="SMR" id="Q49KZ9"/>
<dbReference type="GeneID" id="4108387"/>
<dbReference type="GO" id="GO:0009535">
    <property type="term" value="C:chloroplast thylakoid membrane"/>
    <property type="evidence" value="ECO:0007669"/>
    <property type="project" value="UniProtKB-SubCell"/>
</dbReference>
<dbReference type="GO" id="GO:0009522">
    <property type="term" value="C:photosystem I"/>
    <property type="evidence" value="ECO:0007669"/>
    <property type="project" value="UniProtKB-KW"/>
</dbReference>
<dbReference type="GO" id="GO:0051539">
    <property type="term" value="F:4 iron, 4 sulfur cluster binding"/>
    <property type="evidence" value="ECO:0007669"/>
    <property type="project" value="UniProtKB-KW"/>
</dbReference>
<dbReference type="GO" id="GO:0016168">
    <property type="term" value="F:chlorophyll binding"/>
    <property type="evidence" value="ECO:0007669"/>
    <property type="project" value="UniProtKB-KW"/>
</dbReference>
<dbReference type="GO" id="GO:0009055">
    <property type="term" value="F:electron transfer activity"/>
    <property type="evidence" value="ECO:0007669"/>
    <property type="project" value="UniProtKB-UniRule"/>
</dbReference>
<dbReference type="GO" id="GO:0000287">
    <property type="term" value="F:magnesium ion binding"/>
    <property type="evidence" value="ECO:0007669"/>
    <property type="project" value="UniProtKB-UniRule"/>
</dbReference>
<dbReference type="GO" id="GO:0016491">
    <property type="term" value="F:oxidoreductase activity"/>
    <property type="evidence" value="ECO:0007669"/>
    <property type="project" value="UniProtKB-KW"/>
</dbReference>
<dbReference type="GO" id="GO:0015979">
    <property type="term" value="P:photosynthesis"/>
    <property type="evidence" value="ECO:0007669"/>
    <property type="project" value="UniProtKB-UniRule"/>
</dbReference>
<dbReference type="FunFam" id="1.20.1130.10:FF:000001">
    <property type="entry name" value="Photosystem I P700 chlorophyll a apoprotein A2"/>
    <property type="match status" value="1"/>
</dbReference>
<dbReference type="Gene3D" id="1.20.1130.10">
    <property type="entry name" value="Photosystem I PsaA/PsaB"/>
    <property type="match status" value="1"/>
</dbReference>
<dbReference type="HAMAP" id="MF_00482">
    <property type="entry name" value="PSI_PsaB"/>
    <property type="match status" value="1"/>
</dbReference>
<dbReference type="InterPro" id="IPR001280">
    <property type="entry name" value="PSI_PsaA/B"/>
</dbReference>
<dbReference type="InterPro" id="IPR020586">
    <property type="entry name" value="PSI_PsaA/B_CS"/>
</dbReference>
<dbReference type="InterPro" id="IPR036408">
    <property type="entry name" value="PSI_PsaA/B_sf"/>
</dbReference>
<dbReference type="InterPro" id="IPR006244">
    <property type="entry name" value="PSI_PsaB"/>
</dbReference>
<dbReference type="NCBIfam" id="TIGR01336">
    <property type="entry name" value="psaB"/>
    <property type="match status" value="1"/>
</dbReference>
<dbReference type="PANTHER" id="PTHR30128">
    <property type="entry name" value="OUTER MEMBRANE PROTEIN, OMPA-RELATED"/>
    <property type="match status" value="1"/>
</dbReference>
<dbReference type="PANTHER" id="PTHR30128:SF19">
    <property type="entry name" value="PHOTOSYSTEM I P700 CHLOROPHYLL A APOPROTEIN A1-RELATED"/>
    <property type="match status" value="1"/>
</dbReference>
<dbReference type="Pfam" id="PF00223">
    <property type="entry name" value="PsaA_PsaB"/>
    <property type="match status" value="1"/>
</dbReference>
<dbReference type="PIRSF" id="PIRSF002905">
    <property type="entry name" value="PSI_A"/>
    <property type="match status" value="1"/>
</dbReference>
<dbReference type="PRINTS" id="PR00257">
    <property type="entry name" value="PHOTSYSPSAAB"/>
</dbReference>
<dbReference type="SUPFAM" id="SSF81558">
    <property type="entry name" value="Photosystem I subunits PsaA/PsaB"/>
    <property type="match status" value="1"/>
</dbReference>
<dbReference type="PROSITE" id="PS00419">
    <property type="entry name" value="PHOTOSYSTEM_I_PSAAB"/>
    <property type="match status" value="1"/>
</dbReference>
<accession>Q49KZ9</accession>
<reference key="1">
    <citation type="journal article" date="2005" name="DNA Res.">
        <title>Complete nucleotide sequence of the chloroplast genome from the Tasmanian blue gum, Eucalyptus globulus (Myrtaceae).</title>
        <authorList>
            <person name="Steane D.A."/>
        </authorList>
    </citation>
    <scope>NUCLEOTIDE SEQUENCE [LARGE SCALE GENOMIC DNA]</scope>
</reference>
<proteinExistence type="inferred from homology"/>
<sequence length="734" mass="82438">MALRFPRFSQGLAQDPTTRRIWFGIATAHDFESHDDITEERLYQNIFASHFGQLAIIFLWTSGNLFHVAWQGNFEAWVQDPLHVRPIAHAIWDPHFGQPAVEAFTRGGALGPVNIAYSGVYQWWYTIGLRTNEDLYTGALFLLFLSAISLIAGWLHLQPKWKPSVSWFKNAESRLNHHLSGLFGVSSLAWTGHLVHVAIPGSRGEYVRWNNFLDVLPHPEGLGPLFTGQWNLYAQNPDSNSHLFGTSQGSGTAILTLLGGFHPQTQSLWLTDIAHHHLAIAFIFLVAGHMYRTNFGIGHSIKDLLEAHTPPGGRLGRGHKGLYDTINNSIHFQLGLALASLGVITSLVAQHMYSLPAYAFIAQDFTTQAALYTHHQYIAGFIMTGAFAHGAIFFIRDYNPEQNEDNVLARMLDHKEAIISHLSWASLFLGFHTLGLYVHNDVMLAFGTPEKQILIEPIFAQWIQSAHGKTSYGFDVLLSSTNSPAFNAGQSIWLPGWLNAINENSNSLFLTIGPGDFLVHHAIALGLHTTTLILVKGALDARGSKLMPDKKDFGYSFPCDGPGRGGTCDISAWDAFYLAVFWMLNTIGWVTFYWHWKHITLWQGNVSQFNESSTYLMGWLRDYLWVNSSQLINGYNPFGMNSLSVWAWMFLFGHLVWATGFMFLISWRGYWQELIETLAWAHERTPLANLIRWRDKPVALSIVQARLVGLAHFSVGYIFTYAAFLIASTSGKFG</sequence>
<feature type="chain" id="PRO_0000277113" description="Photosystem I P700 chlorophyll a apoprotein A2">
    <location>
        <begin position="1"/>
        <end position="734"/>
    </location>
</feature>
<feature type="transmembrane region" description="Helical; Name=I" evidence="1">
    <location>
        <begin position="46"/>
        <end position="69"/>
    </location>
</feature>
<feature type="transmembrane region" description="Helical; Name=II" evidence="1">
    <location>
        <begin position="135"/>
        <end position="158"/>
    </location>
</feature>
<feature type="transmembrane region" description="Helical; Name=III" evidence="1">
    <location>
        <begin position="175"/>
        <end position="199"/>
    </location>
</feature>
<feature type="transmembrane region" description="Helical; Name=IV" evidence="1">
    <location>
        <begin position="273"/>
        <end position="291"/>
    </location>
</feature>
<feature type="transmembrane region" description="Helical; Name=V" evidence="1">
    <location>
        <begin position="330"/>
        <end position="353"/>
    </location>
</feature>
<feature type="transmembrane region" description="Helical; Name=VI" evidence="1">
    <location>
        <begin position="369"/>
        <end position="395"/>
    </location>
</feature>
<feature type="transmembrane region" description="Helical; Name=VII" evidence="1">
    <location>
        <begin position="417"/>
        <end position="439"/>
    </location>
</feature>
<feature type="transmembrane region" description="Helical; Name=VIII" evidence="1">
    <location>
        <begin position="517"/>
        <end position="535"/>
    </location>
</feature>
<feature type="transmembrane region" description="Helical; Name=IX" evidence="1">
    <location>
        <begin position="575"/>
        <end position="596"/>
    </location>
</feature>
<feature type="transmembrane region" description="Helical; Name=X" evidence="1">
    <location>
        <begin position="643"/>
        <end position="665"/>
    </location>
</feature>
<feature type="transmembrane region" description="Helical; Name=XI" evidence="1">
    <location>
        <begin position="707"/>
        <end position="727"/>
    </location>
</feature>
<feature type="binding site" evidence="1">
    <location>
        <position position="559"/>
    </location>
    <ligand>
        <name>[4Fe-4S] cluster</name>
        <dbReference type="ChEBI" id="CHEBI:49883"/>
        <note>ligand shared between dimeric partners</note>
    </ligand>
</feature>
<feature type="binding site" evidence="1">
    <location>
        <position position="568"/>
    </location>
    <ligand>
        <name>[4Fe-4S] cluster</name>
        <dbReference type="ChEBI" id="CHEBI:49883"/>
        <note>ligand shared between dimeric partners</note>
    </ligand>
</feature>
<feature type="binding site" description="axial binding residue" evidence="1">
    <location>
        <position position="654"/>
    </location>
    <ligand>
        <name>chlorophyll a</name>
        <dbReference type="ChEBI" id="CHEBI:58416"/>
        <label>B1</label>
    </ligand>
    <ligandPart>
        <name>Mg</name>
        <dbReference type="ChEBI" id="CHEBI:25107"/>
    </ligandPart>
</feature>
<feature type="binding site" description="axial binding residue" evidence="1">
    <location>
        <position position="662"/>
    </location>
    <ligand>
        <name>chlorophyll a</name>
        <dbReference type="ChEBI" id="CHEBI:58416"/>
        <label>B3</label>
    </ligand>
    <ligandPart>
        <name>Mg</name>
        <dbReference type="ChEBI" id="CHEBI:25107"/>
    </ligandPart>
</feature>
<feature type="binding site" evidence="1">
    <location>
        <position position="670"/>
    </location>
    <ligand>
        <name>chlorophyll a</name>
        <dbReference type="ChEBI" id="CHEBI:58416"/>
        <label>B3</label>
    </ligand>
</feature>
<feature type="binding site" evidence="1">
    <location>
        <position position="671"/>
    </location>
    <ligand>
        <name>phylloquinone</name>
        <dbReference type="ChEBI" id="CHEBI:18067"/>
        <label>B</label>
    </ligand>
</feature>
<name>PSAB_EUCGG</name>
<gene>
    <name evidence="1" type="primary">psaB</name>
</gene>